<keyword id="KW-0067">ATP-binding</keyword>
<keyword id="KW-0963">Cytoplasm</keyword>
<keyword id="KW-0275">Fatty acid biosynthesis</keyword>
<keyword id="KW-0276">Fatty acid metabolism</keyword>
<keyword id="KW-0444">Lipid biosynthesis</keyword>
<keyword id="KW-0443">Lipid metabolism</keyword>
<keyword id="KW-0547">Nucleotide-binding</keyword>
<keyword id="KW-1185">Reference proteome</keyword>
<keyword id="KW-0808">Transferase</keyword>
<protein>
    <recommendedName>
        <fullName evidence="1">Acetyl-coenzyme A carboxylase carboxyl transferase subunit alpha</fullName>
        <shortName evidence="1">ACCase subunit alpha</shortName>
        <shortName evidence="1">Acetyl-CoA carboxylase carboxyltransferase subunit alpha</shortName>
        <ecNumber evidence="1">2.1.3.15</ecNumber>
    </recommendedName>
</protein>
<feature type="chain" id="PRO_1000062599" description="Acetyl-coenzyme A carboxylase carboxyl transferase subunit alpha">
    <location>
        <begin position="1"/>
        <end position="312"/>
    </location>
</feature>
<feature type="domain" description="CoA carboxyltransferase C-terminal" evidence="2">
    <location>
        <begin position="25"/>
        <end position="286"/>
    </location>
</feature>
<sequence>MANYLDFEKSIKQIDDDISSAKIRGDDSAVEILKKNLEKEINKVYKNLSEFQRLQLARHPDRPYSLDYVRALLKNYYEIHGDRVFRDDPSIVCFLGYIADKKIVVIAEQKGRGTKYKLKRNFGMPHPEGYRKALRVAKLAEKFSIPIIFFIDTPGAYPGIGAEERGQSEAIARNLFEFSDIKTPTIAIVIGEGGSGGALAIGVADKLAMLSNSIFSVISPEGCAAILWKDPDKSEAATKALKITAEELKELNLIDDVIKEPKMGAHRDKDAAAKAVGNYIIEKLNELEKIPLDEILRKRKEKILNTGVFEEL</sequence>
<reference key="1">
    <citation type="submission" date="2007-07" db="EMBL/GenBank/DDBJ databases">
        <title>Complete genome sequence of Campylobacter hominis ATCC BAA-381, a commensal isolated from the human gastrointestinal tract.</title>
        <authorList>
            <person name="Fouts D.E."/>
            <person name="Mongodin E.F."/>
            <person name="Puiu D."/>
            <person name="Sebastian Y."/>
            <person name="Miller W.G."/>
            <person name="Mandrell R.E."/>
            <person name="Nelson K.E."/>
        </authorList>
    </citation>
    <scope>NUCLEOTIDE SEQUENCE [LARGE SCALE GENOMIC DNA]</scope>
    <source>
        <strain>ATCC BAA-381 / DSM 21671 / CCUG 45161 / LMG 19568 / NCTC 13146 / CH001A</strain>
    </source>
</reference>
<name>ACCA_CAMHC</name>
<gene>
    <name evidence="1" type="primary">accA</name>
    <name type="ordered locus">CHAB381_0228</name>
</gene>
<proteinExistence type="inferred from homology"/>
<accession>A7HZZ3</accession>
<evidence type="ECO:0000255" key="1">
    <source>
        <dbReference type="HAMAP-Rule" id="MF_00823"/>
    </source>
</evidence>
<evidence type="ECO:0000255" key="2">
    <source>
        <dbReference type="PROSITE-ProRule" id="PRU01137"/>
    </source>
</evidence>
<organism>
    <name type="scientific">Campylobacter hominis (strain ATCC BAA-381 / DSM 21671 / CCUG 45161 / LMG 19568 / NCTC 13146 / CH001A)</name>
    <dbReference type="NCBI Taxonomy" id="360107"/>
    <lineage>
        <taxon>Bacteria</taxon>
        <taxon>Pseudomonadati</taxon>
        <taxon>Campylobacterota</taxon>
        <taxon>Epsilonproteobacteria</taxon>
        <taxon>Campylobacterales</taxon>
        <taxon>Campylobacteraceae</taxon>
        <taxon>Campylobacter</taxon>
    </lineage>
</organism>
<dbReference type="EC" id="2.1.3.15" evidence="1"/>
<dbReference type="EMBL" id="CP000776">
    <property type="protein sequence ID" value="ABS51332.1"/>
    <property type="molecule type" value="Genomic_DNA"/>
</dbReference>
<dbReference type="RefSeq" id="WP_012108115.1">
    <property type="nucleotide sequence ID" value="NC_009714.1"/>
</dbReference>
<dbReference type="SMR" id="A7HZZ3"/>
<dbReference type="STRING" id="360107.CHAB381_0228"/>
<dbReference type="KEGG" id="cha:CHAB381_0228"/>
<dbReference type="eggNOG" id="COG0825">
    <property type="taxonomic scope" value="Bacteria"/>
</dbReference>
<dbReference type="HOGENOM" id="CLU_015486_0_2_7"/>
<dbReference type="OrthoDB" id="9808023at2"/>
<dbReference type="UniPathway" id="UPA00655">
    <property type="reaction ID" value="UER00711"/>
</dbReference>
<dbReference type="Proteomes" id="UP000002407">
    <property type="component" value="Chromosome"/>
</dbReference>
<dbReference type="GO" id="GO:0009317">
    <property type="term" value="C:acetyl-CoA carboxylase complex"/>
    <property type="evidence" value="ECO:0007669"/>
    <property type="project" value="InterPro"/>
</dbReference>
<dbReference type="GO" id="GO:0003989">
    <property type="term" value="F:acetyl-CoA carboxylase activity"/>
    <property type="evidence" value="ECO:0007669"/>
    <property type="project" value="InterPro"/>
</dbReference>
<dbReference type="GO" id="GO:0005524">
    <property type="term" value="F:ATP binding"/>
    <property type="evidence" value="ECO:0007669"/>
    <property type="project" value="UniProtKB-KW"/>
</dbReference>
<dbReference type="GO" id="GO:0016743">
    <property type="term" value="F:carboxyl- or carbamoyltransferase activity"/>
    <property type="evidence" value="ECO:0007669"/>
    <property type="project" value="UniProtKB-UniRule"/>
</dbReference>
<dbReference type="GO" id="GO:0006633">
    <property type="term" value="P:fatty acid biosynthetic process"/>
    <property type="evidence" value="ECO:0007669"/>
    <property type="project" value="UniProtKB-KW"/>
</dbReference>
<dbReference type="GO" id="GO:2001295">
    <property type="term" value="P:malonyl-CoA biosynthetic process"/>
    <property type="evidence" value="ECO:0007669"/>
    <property type="project" value="UniProtKB-UniRule"/>
</dbReference>
<dbReference type="Gene3D" id="3.90.226.10">
    <property type="entry name" value="2-enoyl-CoA Hydratase, Chain A, domain 1"/>
    <property type="match status" value="1"/>
</dbReference>
<dbReference type="HAMAP" id="MF_00823">
    <property type="entry name" value="AcetylCoA_CT_alpha"/>
    <property type="match status" value="1"/>
</dbReference>
<dbReference type="InterPro" id="IPR001095">
    <property type="entry name" value="Acetyl_CoA_COase_a_su"/>
</dbReference>
<dbReference type="InterPro" id="IPR029045">
    <property type="entry name" value="ClpP/crotonase-like_dom_sf"/>
</dbReference>
<dbReference type="InterPro" id="IPR011763">
    <property type="entry name" value="COA_CT_C"/>
</dbReference>
<dbReference type="NCBIfam" id="TIGR00513">
    <property type="entry name" value="accA"/>
    <property type="match status" value="1"/>
</dbReference>
<dbReference type="NCBIfam" id="NF041504">
    <property type="entry name" value="AccA_sub"/>
    <property type="match status" value="1"/>
</dbReference>
<dbReference type="NCBIfam" id="NF004344">
    <property type="entry name" value="PRK05724.1"/>
    <property type="match status" value="1"/>
</dbReference>
<dbReference type="PANTHER" id="PTHR42853">
    <property type="entry name" value="ACETYL-COENZYME A CARBOXYLASE CARBOXYL TRANSFERASE SUBUNIT ALPHA"/>
    <property type="match status" value="1"/>
</dbReference>
<dbReference type="PANTHER" id="PTHR42853:SF3">
    <property type="entry name" value="ACETYL-COENZYME A CARBOXYLASE CARBOXYL TRANSFERASE SUBUNIT ALPHA, CHLOROPLASTIC"/>
    <property type="match status" value="1"/>
</dbReference>
<dbReference type="Pfam" id="PF03255">
    <property type="entry name" value="ACCA"/>
    <property type="match status" value="1"/>
</dbReference>
<dbReference type="PRINTS" id="PR01069">
    <property type="entry name" value="ACCCTRFRASEA"/>
</dbReference>
<dbReference type="SUPFAM" id="SSF52096">
    <property type="entry name" value="ClpP/crotonase"/>
    <property type="match status" value="1"/>
</dbReference>
<dbReference type="PROSITE" id="PS50989">
    <property type="entry name" value="COA_CT_CTER"/>
    <property type="match status" value="1"/>
</dbReference>
<comment type="function">
    <text evidence="1">Component of the acetyl coenzyme A carboxylase (ACC) complex. First, biotin carboxylase catalyzes the carboxylation of biotin on its carrier protein (BCCP) and then the CO(2) group is transferred by the carboxyltransferase to acetyl-CoA to form malonyl-CoA.</text>
</comment>
<comment type="catalytic activity">
    <reaction evidence="1">
        <text>N(6)-carboxybiotinyl-L-lysyl-[protein] + acetyl-CoA = N(6)-biotinyl-L-lysyl-[protein] + malonyl-CoA</text>
        <dbReference type="Rhea" id="RHEA:54728"/>
        <dbReference type="Rhea" id="RHEA-COMP:10505"/>
        <dbReference type="Rhea" id="RHEA-COMP:10506"/>
        <dbReference type="ChEBI" id="CHEBI:57288"/>
        <dbReference type="ChEBI" id="CHEBI:57384"/>
        <dbReference type="ChEBI" id="CHEBI:83144"/>
        <dbReference type="ChEBI" id="CHEBI:83145"/>
        <dbReference type="EC" id="2.1.3.15"/>
    </reaction>
</comment>
<comment type="pathway">
    <text evidence="1">Lipid metabolism; malonyl-CoA biosynthesis; malonyl-CoA from acetyl-CoA: step 1/1.</text>
</comment>
<comment type="subunit">
    <text evidence="1">Acetyl-CoA carboxylase is a heterohexamer composed of biotin carboxyl carrier protein (AccB), biotin carboxylase (AccC) and two subunits each of ACCase subunit alpha (AccA) and ACCase subunit beta (AccD).</text>
</comment>
<comment type="subcellular location">
    <subcellularLocation>
        <location evidence="1">Cytoplasm</location>
    </subcellularLocation>
</comment>
<comment type="similarity">
    <text evidence="1">Belongs to the AccA family.</text>
</comment>